<dbReference type="EMBL" id="BC066628">
    <property type="protein sequence ID" value="AAH66628.1"/>
    <property type="molecule type" value="mRNA"/>
</dbReference>
<dbReference type="RefSeq" id="NP_998341.1">
    <property type="nucleotide sequence ID" value="NM_213176.1"/>
</dbReference>
<dbReference type="RefSeq" id="XP_005162219.1">
    <property type="nucleotide sequence ID" value="XM_005162162.5"/>
</dbReference>
<dbReference type="RefSeq" id="XP_017209027.1">
    <property type="nucleotide sequence ID" value="XM_017353538.1"/>
</dbReference>
<dbReference type="SMR" id="Q6NYE2"/>
<dbReference type="FunCoup" id="Q6NYE2">
    <property type="interactions" value="1931"/>
</dbReference>
<dbReference type="STRING" id="7955.ENSDARP00000004838"/>
<dbReference type="PaxDb" id="7955-ENSDARP00000004838"/>
<dbReference type="Ensembl" id="ENSDART00000010647">
    <property type="protein sequence ID" value="ENSDARP00000004838"/>
    <property type="gene ID" value="ENSDARG00000011510"/>
</dbReference>
<dbReference type="Ensembl" id="ENSDART00000170713">
    <property type="protein sequence ID" value="ENSDARP00000141590"/>
    <property type="gene ID" value="ENSDARG00000115981"/>
</dbReference>
<dbReference type="GeneID" id="406455"/>
<dbReference type="KEGG" id="dre:406455"/>
<dbReference type="AGR" id="ZFIN:ZDB-GENE-040426-2213"/>
<dbReference type="CTD" id="55920"/>
<dbReference type="ZFIN" id="ZDB-GENE-040426-2213">
    <property type="gene designation" value="rcc2"/>
</dbReference>
<dbReference type="eggNOG" id="KOG1427">
    <property type="taxonomic scope" value="Eukaryota"/>
</dbReference>
<dbReference type="HOGENOM" id="CLU_005210_7_0_1"/>
<dbReference type="InParanoid" id="Q6NYE2"/>
<dbReference type="OrthoDB" id="297375at2759"/>
<dbReference type="PhylomeDB" id="Q6NYE2"/>
<dbReference type="TreeFam" id="TF101168"/>
<dbReference type="PRO" id="PR:Q6NYE2"/>
<dbReference type="Proteomes" id="UP000000437">
    <property type="component" value="Alternate scaffold 23"/>
</dbReference>
<dbReference type="Proteomes" id="UP000000437">
    <property type="component" value="Chromosome 23"/>
</dbReference>
<dbReference type="Bgee" id="ENSDARG00000011510">
    <property type="expression patterns" value="Expressed in early embryo and 28 other cell types or tissues"/>
</dbReference>
<dbReference type="ExpressionAtlas" id="Q6NYE2">
    <property type="expression patterns" value="baseline and differential"/>
</dbReference>
<dbReference type="GO" id="GO:0000775">
    <property type="term" value="C:chromosome, centromeric region"/>
    <property type="evidence" value="ECO:0007669"/>
    <property type="project" value="UniProtKB-SubCell"/>
</dbReference>
<dbReference type="GO" id="GO:0005737">
    <property type="term" value="C:cytoplasm"/>
    <property type="evidence" value="ECO:0007669"/>
    <property type="project" value="UniProtKB-KW"/>
</dbReference>
<dbReference type="GO" id="GO:0016020">
    <property type="term" value="C:membrane"/>
    <property type="evidence" value="ECO:0000318"/>
    <property type="project" value="GO_Central"/>
</dbReference>
<dbReference type="GO" id="GO:0030496">
    <property type="term" value="C:midbody"/>
    <property type="evidence" value="ECO:0007669"/>
    <property type="project" value="UniProtKB-SubCell"/>
</dbReference>
<dbReference type="GO" id="GO:0005730">
    <property type="term" value="C:nucleolus"/>
    <property type="evidence" value="ECO:0007669"/>
    <property type="project" value="UniProtKB-SubCell"/>
</dbReference>
<dbReference type="GO" id="GO:0005886">
    <property type="term" value="C:plasma membrane"/>
    <property type="evidence" value="ECO:0007669"/>
    <property type="project" value="UniProtKB-SubCell"/>
</dbReference>
<dbReference type="GO" id="GO:0005819">
    <property type="term" value="C:spindle"/>
    <property type="evidence" value="ECO:0007669"/>
    <property type="project" value="UniProtKB-SubCell"/>
</dbReference>
<dbReference type="GO" id="GO:0031267">
    <property type="term" value="F:small GTPase binding"/>
    <property type="evidence" value="ECO:0000318"/>
    <property type="project" value="GO_Central"/>
</dbReference>
<dbReference type="GO" id="GO:0051301">
    <property type="term" value="P:cell division"/>
    <property type="evidence" value="ECO:0007669"/>
    <property type="project" value="UniProtKB-KW"/>
</dbReference>
<dbReference type="GO" id="GO:0072356">
    <property type="term" value="P:chromosome passenger complex localization to kinetochore"/>
    <property type="evidence" value="ECO:0000318"/>
    <property type="project" value="GO_Central"/>
</dbReference>
<dbReference type="GO" id="GO:0001755">
    <property type="term" value="P:neural crest cell migration"/>
    <property type="evidence" value="ECO:0000315"/>
    <property type="project" value="UniProtKB"/>
</dbReference>
<dbReference type="GO" id="GO:0051987">
    <property type="term" value="P:positive regulation of attachment of spindle microtubules to kinetochore"/>
    <property type="evidence" value="ECO:0000318"/>
    <property type="project" value="GO_Central"/>
</dbReference>
<dbReference type="FunFam" id="2.130.10.30:FF:000022">
    <property type="entry name" value="RCC2 isoform 1"/>
    <property type="match status" value="1"/>
</dbReference>
<dbReference type="FunFam" id="2.130.10.30:FF:000009">
    <property type="entry name" value="Regulator of chromosome condensation 2"/>
    <property type="match status" value="1"/>
</dbReference>
<dbReference type="Gene3D" id="2.130.10.30">
    <property type="entry name" value="Regulator of chromosome condensation 1/beta-lactamase-inhibitor protein II"/>
    <property type="match status" value="2"/>
</dbReference>
<dbReference type="InterPro" id="IPR009091">
    <property type="entry name" value="RCC1/BLIP-II"/>
</dbReference>
<dbReference type="InterPro" id="IPR028641">
    <property type="entry name" value="RCC2"/>
</dbReference>
<dbReference type="InterPro" id="IPR000408">
    <property type="entry name" value="Reg_chr_condens"/>
</dbReference>
<dbReference type="PANTHER" id="PTHR46207">
    <property type="entry name" value="PROTEIN RCC2"/>
    <property type="match status" value="1"/>
</dbReference>
<dbReference type="PANTHER" id="PTHR46207:SF1">
    <property type="entry name" value="PROTEIN RCC2"/>
    <property type="match status" value="1"/>
</dbReference>
<dbReference type="Pfam" id="PF25390">
    <property type="entry name" value="WD40_RLD"/>
    <property type="match status" value="1"/>
</dbReference>
<dbReference type="PRINTS" id="PR00633">
    <property type="entry name" value="RCCNDNSATION"/>
</dbReference>
<dbReference type="SUPFAM" id="SSF50985">
    <property type="entry name" value="RCC1/BLIP-II"/>
    <property type="match status" value="1"/>
</dbReference>
<dbReference type="PROSITE" id="PS00626">
    <property type="entry name" value="RCC1_2"/>
    <property type="match status" value="2"/>
</dbReference>
<dbReference type="PROSITE" id="PS50012">
    <property type="entry name" value="RCC1_3"/>
    <property type="match status" value="5"/>
</dbReference>
<evidence type="ECO:0000250" key="1">
    <source>
        <dbReference type="UniProtKB" id="Q9P258"/>
    </source>
</evidence>
<evidence type="ECO:0000256" key="2">
    <source>
        <dbReference type="SAM" id="MobiDB-lite"/>
    </source>
</evidence>
<evidence type="ECO:0000269" key="3">
    <source>
    </source>
</evidence>
<name>RCC2_DANRE</name>
<sequence>MPRKKVTDVSGNGGLKRKRGGGKKKEREFSSDDEFDDYEQENTKKPGKPAAKAGLQPVTVADDVKEKIKLEVPKVKGQLLIFGATNWDLIGRKEVPKQQAAFRNLGQNLWGPHRYGCLSDVQVSCVVSGPCAAHSLIITTEGKLWSWGRNDKGQLGHGDTKRLEAPKLIEGLGEEVIVAAACGRNHTLALTENGTVYTFGENKLGQLGQGNQTDAVLSPATIQYNGQPIVKVACGAEFSMIVDCKGNLYSFGCPEYGQLGHNSDGKFIARAQRIEFDCELIPRRVAIFIEKTKDGQVLPVPNVVARDVACGANHTLVLDSQKRVFSWGFGGYGRLGHAEQKDEMVPRLVKLFDFPGRGATQIYCGYQCSFALSEMGGLFFWGVTNTSRESTMYPKAVQDLCGWKIRSLACGKSSIIVAADDSTISWGPSPTFGELGYGDNKPKSSTTAQEVKTLDGVYSEQVVMGYSHSLVIARQDTEQEKEKLKKLPEYNPRTL</sequence>
<reference key="1">
    <citation type="submission" date="2004-02" db="EMBL/GenBank/DDBJ databases">
        <authorList>
            <consortium name="NIH - Zebrafish Gene Collection (ZGC) project"/>
        </authorList>
    </citation>
    <scope>NUCLEOTIDE SEQUENCE [LARGE SCALE MRNA]</scope>
    <source>
        <tissue>Kidney</tissue>
    </source>
</reference>
<reference key="2">
    <citation type="journal article" date="2014" name="J. Cell Sci.">
        <title>Coronin-1C and RCC2 guide mesenchymal migration by trafficking Rac1 and controlling GEF exposure.</title>
        <authorList>
            <person name="Williamson R.C."/>
            <person name="Cowell C.A."/>
            <person name="Hammond C.L."/>
            <person name="Bergen D.J."/>
            <person name="Roper J.A."/>
            <person name="Feng Y."/>
            <person name="Rendall T.C."/>
            <person name="Race P.R."/>
            <person name="Bass M.D."/>
        </authorList>
    </citation>
    <scope>FUNCTION</scope>
    <scope>DISRUPTION PHENOTYPE</scope>
</reference>
<accession>Q6NYE2</accession>
<comment type="function">
    <text evidence="1 3">Multifunctional protein that may affect its functions by regulating the activity of small GTPases, such as RAC1 and RALA. Required for normal progress through the cell cycle, both during interphase and during mitosis. Required for normal attachment of kinetochores to mitotic spindles. Required for normal organization of the microtubule cytoskeleton in interphase cells. Interferes with the activation of RAC1 by guanine nucleotide exchange factors. Prevents accumulation of active, GTP-bound RAC1, and suppresses RAC1-mediated reorganization of the actin cytoskeleton and formation of membrane protrusions (By similarity). Required for normal cellular responses to contacts with the extracellular matrix of adjacent cells, and for directional cell migration (PubMed:25074804).</text>
</comment>
<comment type="subunit">
    <text evidence="1">Interacts with RAC1. Interacts with CORO1C.</text>
</comment>
<comment type="subcellular location">
    <subcellularLocation>
        <location evidence="1">Nucleus</location>
        <location evidence="1">Nucleolus</location>
    </subcellularLocation>
    <subcellularLocation>
        <location evidence="1">Nucleus</location>
    </subcellularLocation>
    <subcellularLocation>
        <location evidence="1">Cytoplasm</location>
        <location evidence="1">Cytoskeleton</location>
    </subcellularLocation>
    <subcellularLocation>
        <location evidence="1">Chromosome</location>
        <location evidence="1">Centromere</location>
    </subcellularLocation>
    <subcellularLocation>
        <location evidence="1">Cytoplasm</location>
        <location evidence="1">Cytoskeleton</location>
        <location evidence="1">Spindle</location>
    </subcellularLocation>
    <subcellularLocation>
        <location evidence="1">Chromosome</location>
    </subcellularLocation>
    <subcellularLocation>
        <location evidence="1">Midbody</location>
    </subcellularLocation>
    <subcellularLocation>
        <location evidence="1">Cell membrane</location>
        <topology evidence="1">Peripheral membrane protein</topology>
        <orientation evidence="1">Cytoplasmic side</orientation>
    </subcellularLocation>
</comment>
<comment type="disruption phenotype">
    <text evidence="3">Morpholino knockdown in single-cell embryos does not lead to gross anatomical defects, but causes subtle defects in the migration of neural crest cells, so that cells populate also the pharyngeal pouch, instead of being restricted to pharyngeal arches.</text>
</comment>
<feature type="chain" id="PRO_0000206654" description="Protein RCC2 homolog">
    <location>
        <begin position="1"/>
        <end position="495"/>
    </location>
</feature>
<feature type="repeat" description="RCC1 1">
    <location>
        <begin position="76"/>
        <end position="138"/>
    </location>
</feature>
<feature type="repeat" description="RCC1 2">
    <location>
        <begin position="141"/>
        <end position="192"/>
    </location>
</feature>
<feature type="repeat" description="RCC1 3">
    <location>
        <begin position="194"/>
        <end position="244"/>
    </location>
</feature>
<feature type="repeat" description="RCC1 4">
    <location>
        <begin position="246"/>
        <end position="320"/>
    </location>
</feature>
<feature type="repeat" description="RCC1 5">
    <location>
        <begin position="321"/>
        <end position="374"/>
    </location>
</feature>
<feature type="repeat" description="RCC1 6">
    <location>
        <begin position="376"/>
        <end position="420"/>
    </location>
</feature>
<feature type="repeat" description="RCC1 7">
    <location>
        <begin position="421"/>
        <end position="474"/>
    </location>
</feature>
<feature type="region of interest" description="Disordered" evidence="2">
    <location>
        <begin position="1"/>
        <end position="56"/>
    </location>
</feature>
<feature type="region of interest" description="Required for interaction with RAC1" evidence="1">
    <location>
        <begin position="291"/>
        <end position="298"/>
    </location>
</feature>
<feature type="compositionally biased region" description="Acidic residues" evidence="2">
    <location>
        <begin position="31"/>
        <end position="40"/>
    </location>
</feature>
<gene>
    <name type="primary">rcc2</name>
    <name type="ORF">zgc:77115</name>
</gene>
<keyword id="KW-0131">Cell cycle</keyword>
<keyword id="KW-0132">Cell division</keyword>
<keyword id="KW-1003">Cell membrane</keyword>
<keyword id="KW-0137">Centromere</keyword>
<keyword id="KW-0158">Chromosome</keyword>
<keyword id="KW-0963">Cytoplasm</keyword>
<keyword id="KW-0206">Cytoskeleton</keyword>
<keyword id="KW-0472">Membrane</keyword>
<keyword id="KW-0498">Mitosis</keyword>
<keyword id="KW-0539">Nucleus</keyword>
<keyword id="KW-1185">Reference proteome</keyword>
<keyword id="KW-0677">Repeat</keyword>
<organism>
    <name type="scientific">Danio rerio</name>
    <name type="common">Zebrafish</name>
    <name type="synonym">Brachydanio rerio</name>
    <dbReference type="NCBI Taxonomy" id="7955"/>
    <lineage>
        <taxon>Eukaryota</taxon>
        <taxon>Metazoa</taxon>
        <taxon>Chordata</taxon>
        <taxon>Craniata</taxon>
        <taxon>Vertebrata</taxon>
        <taxon>Euteleostomi</taxon>
        <taxon>Actinopterygii</taxon>
        <taxon>Neopterygii</taxon>
        <taxon>Teleostei</taxon>
        <taxon>Ostariophysi</taxon>
        <taxon>Cypriniformes</taxon>
        <taxon>Danionidae</taxon>
        <taxon>Danioninae</taxon>
        <taxon>Danio</taxon>
    </lineage>
</organism>
<proteinExistence type="evidence at transcript level"/>
<protein>
    <recommendedName>
        <fullName>Protein RCC2 homolog</fullName>
    </recommendedName>
</protein>